<comment type="function">
    <text>Sigma factors are initiation factors that promote the attachment of RNA polymerase to specific initiation sites and are then released. This sigma factor is responsible for the expression of sporulation specific genes.</text>
</comment>
<comment type="similarity">
    <text evidence="2">Belongs to the sigma-70 factor family.</text>
</comment>
<feature type="chain" id="PRO_0000093946" description="RNA polymerase sigma-G factor">
    <location>
        <begin position="1"/>
        <end position="257"/>
    </location>
</feature>
<feature type="DNA-binding region" description="H-T-H motif" evidence="1">
    <location>
        <begin position="228"/>
        <end position="247"/>
    </location>
</feature>
<feature type="short sequence motif" description="Polymerase core binding">
    <location>
        <begin position="66"/>
        <end position="79"/>
    </location>
</feature>
<accession>P33658</accession>
<proteinExistence type="inferred from homology"/>
<sequence length="257" mass="29656">MVINKVEICGVNTSKLPVLKEKEMRELLISMRNGNTTAREKFIKGNLRLVLSVIQRFNNRGENADDLFQVGCIGLIKSIDNFDLSQNVKFSTYAVPMIIGEIRRYLRDNNSIRVSRSLRDIAYRALQVRDRLISKNNKEPTVSQIAKELKIPREEVIFALDAIQDPISLFEPIYHDDGDAIYVMDQISDNKNLDDSWLQNISIKEAMKKLSDREKMILNMRFFDGRTQMEVADEIGISQAQVSRLEKTALKHMKKYV</sequence>
<protein>
    <recommendedName>
        <fullName>RNA polymerase sigma-G factor</fullName>
    </recommendedName>
</protein>
<name>RPSG_CLOAB</name>
<reference key="1">
    <citation type="journal article" date="1994" name="J. Bacteriol.">
        <title>Sporulation and primary sigma factor homologous genes in Clostridium acetobutylicum.</title>
        <authorList>
            <person name="Sauer U."/>
            <person name="Treuner A."/>
            <person name="Buchholz M."/>
            <person name="Santangelo J.D."/>
            <person name="Durre P."/>
        </authorList>
    </citation>
    <scope>NUCLEOTIDE SEQUENCE [GENOMIC DNA]</scope>
    <source>
        <strain>ATCC 824 / DSM 792 / JCM 1419 / IAM 19013 / LMG 5710 / NBRC 13948 / NRRL B-527 / VKM B-1787 / 2291 / W</strain>
    </source>
</reference>
<reference key="2">
    <citation type="journal article" date="1995" name="Gene">
        <title>Sequence and arrangement of genes encoding sigma factors in Clostridium acetobutylicum ATCC 824.</title>
        <authorList>
            <person name="Wong J."/>
            <person name="Sass C."/>
            <person name="Bennett G.N."/>
        </authorList>
    </citation>
    <scope>NUCLEOTIDE SEQUENCE [GENOMIC DNA]</scope>
    <source>
        <strain>ATCC 824 / DSM 792 / JCM 1419 / IAM 19013 / LMG 5710 / NBRC 13948 / NRRL B-527 / VKM B-1787 / 2291 / W</strain>
    </source>
</reference>
<reference key="3">
    <citation type="journal article" date="2001" name="J. Bacteriol.">
        <title>Genome sequence and comparative analysis of the solvent-producing bacterium Clostridium acetobutylicum.</title>
        <authorList>
            <person name="Noelling J."/>
            <person name="Breton G."/>
            <person name="Omelchenko M.V."/>
            <person name="Makarova K.S."/>
            <person name="Zeng Q."/>
            <person name="Gibson R."/>
            <person name="Lee H.M."/>
            <person name="Dubois J."/>
            <person name="Qiu D."/>
            <person name="Hitti J."/>
            <person name="Wolf Y.I."/>
            <person name="Tatusov R.L."/>
            <person name="Sabathe F."/>
            <person name="Doucette-Stamm L.A."/>
            <person name="Soucaille P."/>
            <person name="Daly M.J."/>
            <person name="Bennett G.N."/>
            <person name="Koonin E.V."/>
            <person name="Smith D.R."/>
        </authorList>
    </citation>
    <scope>NUCLEOTIDE SEQUENCE [LARGE SCALE GENOMIC DNA]</scope>
    <source>
        <strain>ATCC 824 / DSM 792 / JCM 1419 / IAM 19013 / LMG 5710 / NBRC 13948 / NRRL B-527 / VKM B-1787 / 2291 / W</strain>
    </source>
</reference>
<gene>
    <name type="primary">sigG</name>
    <name type="ordered locus">CA_C1696</name>
</gene>
<organism>
    <name type="scientific">Clostridium acetobutylicum (strain ATCC 824 / DSM 792 / JCM 1419 / IAM 19013 / LMG 5710 / NBRC 13948 / NRRL B-527 / VKM B-1787 / 2291 / W)</name>
    <dbReference type="NCBI Taxonomy" id="272562"/>
    <lineage>
        <taxon>Bacteria</taxon>
        <taxon>Bacillati</taxon>
        <taxon>Bacillota</taxon>
        <taxon>Clostridia</taxon>
        <taxon>Eubacteriales</taxon>
        <taxon>Clostridiaceae</taxon>
        <taxon>Clostridium</taxon>
    </lineage>
</organism>
<dbReference type="EMBL" id="Z23079">
    <property type="protein sequence ID" value="CAA80621.1"/>
    <property type="molecule type" value="Genomic_DNA"/>
</dbReference>
<dbReference type="EMBL" id="U07420">
    <property type="protein sequence ID" value="AAC43310.1"/>
    <property type="molecule type" value="Genomic_DNA"/>
</dbReference>
<dbReference type="EMBL" id="AE001437">
    <property type="protein sequence ID" value="AAK79662.1"/>
    <property type="molecule type" value="Genomic_DNA"/>
</dbReference>
<dbReference type="PIR" id="C97109">
    <property type="entry name" value="C97109"/>
</dbReference>
<dbReference type="PIR" id="I40621">
    <property type="entry name" value="I40621"/>
</dbReference>
<dbReference type="RefSeq" id="NP_348322.1">
    <property type="nucleotide sequence ID" value="NC_003030.1"/>
</dbReference>
<dbReference type="RefSeq" id="WP_010965003.1">
    <property type="nucleotide sequence ID" value="NC_003030.1"/>
</dbReference>
<dbReference type="SMR" id="P33658"/>
<dbReference type="STRING" id="272562.CA_C1696"/>
<dbReference type="GeneID" id="44998191"/>
<dbReference type="KEGG" id="cac:CA_C1696"/>
<dbReference type="PATRIC" id="fig|272562.8.peg.1899"/>
<dbReference type="eggNOG" id="COG1191">
    <property type="taxonomic scope" value="Bacteria"/>
</dbReference>
<dbReference type="HOGENOM" id="CLU_014793_8_5_9"/>
<dbReference type="OrthoDB" id="9809557at2"/>
<dbReference type="Proteomes" id="UP000000814">
    <property type="component" value="Chromosome"/>
</dbReference>
<dbReference type="GO" id="GO:0003677">
    <property type="term" value="F:DNA binding"/>
    <property type="evidence" value="ECO:0007669"/>
    <property type="project" value="UniProtKB-KW"/>
</dbReference>
<dbReference type="GO" id="GO:0016987">
    <property type="term" value="F:sigma factor activity"/>
    <property type="evidence" value="ECO:0007669"/>
    <property type="project" value="UniProtKB-KW"/>
</dbReference>
<dbReference type="GO" id="GO:0006352">
    <property type="term" value="P:DNA-templated transcription initiation"/>
    <property type="evidence" value="ECO:0007669"/>
    <property type="project" value="InterPro"/>
</dbReference>
<dbReference type="GO" id="GO:0030435">
    <property type="term" value="P:sporulation resulting in formation of a cellular spore"/>
    <property type="evidence" value="ECO:0007669"/>
    <property type="project" value="UniProtKB-KW"/>
</dbReference>
<dbReference type="CDD" id="cd06171">
    <property type="entry name" value="Sigma70_r4"/>
    <property type="match status" value="1"/>
</dbReference>
<dbReference type="FunFam" id="1.20.120.1810:FF:000002">
    <property type="entry name" value="RNA polymerase sigma factor"/>
    <property type="match status" value="1"/>
</dbReference>
<dbReference type="Gene3D" id="1.20.120.1810">
    <property type="match status" value="1"/>
</dbReference>
<dbReference type="Gene3D" id="1.20.140.160">
    <property type="match status" value="1"/>
</dbReference>
<dbReference type="InterPro" id="IPR014284">
    <property type="entry name" value="RNA_pol_sigma-70_dom"/>
</dbReference>
<dbReference type="InterPro" id="IPR014322">
    <property type="entry name" value="RNA_pol_sigma-B/F/G"/>
</dbReference>
<dbReference type="InterPro" id="IPR014212">
    <property type="entry name" value="RNA_pol_sigma-G"/>
</dbReference>
<dbReference type="InterPro" id="IPR000943">
    <property type="entry name" value="RNA_pol_sigma70"/>
</dbReference>
<dbReference type="InterPro" id="IPR007627">
    <property type="entry name" value="RNA_pol_sigma70_r2"/>
</dbReference>
<dbReference type="InterPro" id="IPR007624">
    <property type="entry name" value="RNA_pol_sigma70_r3"/>
</dbReference>
<dbReference type="InterPro" id="IPR007630">
    <property type="entry name" value="RNA_pol_sigma70_r4"/>
</dbReference>
<dbReference type="InterPro" id="IPR013325">
    <property type="entry name" value="RNA_pol_sigma_r2"/>
</dbReference>
<dbReference type="InterPro" id="IPR013324">
    <property type="entry name" value="RNA_pol_sigma_r3/r4-like"/>
</dbReference>
<dbReference type="InterPro" id="IPR050239">
    <property type="entry name" value="Sigma-70_RNA_pol_init_factors"/>
</dbReference>
<dbReference type="NCBIfam" id="NF006071">
    <property type="entry name" value="PRK08215.1"/>
    <property type="match status" value="1"/>
</dbReference>
<dbReference type="NCBIfam" id="TIGR02980">
    <property type="entry name" value="SigBFG"/>
    <property type="match status" value="1"/>
</dbReference>
<dbReference type="NCBIfam" id="TIGR02937">
    <property type="entry name" value="sigma70-ECF"/>
    <property type="match status" value="1"/>
</dbReference>
<dbReference type="NCBIfam" id="TIGR02850">
    <property type="entry name" value="spore_sigG"/>
    <property type="match status" value="1"/>
</dbReference>
<dbReference type="PANTHER" id="PTHR30603">
    <property type="entry name" value="RNA POLYMERASE SIGMA FACTOR RPO"/>
    <property type="match status" value="1"/>
</dbReference>
<dbReference type="PANTHER" id="PTHR30603:SF17">
    <property type="entry name" value="RNA POLYMERASE SIGMA-G FACTOR"/>
    <property type="match status" value="1"/>
</dbReference>
<dbReference type="Pfam" id="PF04542">
    <property type="entry name" value="Sigma70_r2"/>
    <property type="match status" value="1"/>
</dbReference>
<dbReference type="Pfam" id="PF04539">
    <property type="entry name" value="Sigma70_r3"/>
    <property type="match status" value="1"/>
</dbReference>
<dbReference type="Pfam" id="PF04545">
    <property type="entry name" value="Sigma70_r4"/>
    <property type="match status" value="1"/>
</dbReference>
<dbReference type="PIRSF" id="PIRSF000770">
    <property type="entry name" value="RNA_pol_sigma-SigE/K"/>
    <property type="match status" value="1"/>
</dbReference>
<dbReference type="PRINTS" id="PR00046">
    <property type="entry name" value="SIGMA70FCT"/>
</dbReference>
<dbReference type="SUPFAM" id="SSF88946">
    <property type="entry name" value="Sigma2 domain of RNA polymerase sigma factors"/>
    <property type="match status" value="1"/>
</dbReference>
<dbReference type="SUPFAM" id="SSF88659">
    <property type="entry name" value="Sigma3 and sigma4 domains of RNA polymerase sigma factors"/>
    <property type="match status" value="2"/>
</dbReference>
<dbReference type="PROSITE" id="PS00715">
    <property type="entry name" value="SIGMA70_1"/>
    <property type="match status" value="1"/>
</dbReference>
<dbReference type="PROSITE" id="PS00716">
    <property type="entry name" value="SIGMA70_2"/>
    <property type="match status" value="1"/>
</dbReference>
<keyword id="KW-0238">DNA-binding</keyword>
<keyword id="KW-1185">Reference proteome</keyword>
<keyword id="KW-0731">Sigma factor</keyword>
<keyword id="KW-0749">Sporulation</keyword>
<keyword id="KW-0804">Transcription</keyword>
<keyword id="KW-0805">Transcription regulation</keyword>
<evidence type="ECO:0000250" key="1"/>
<evidence type="ECO:0000305" key="2"/>